<keyword id="KW-0067">ATP-binding</keyword>
<keyword id="KW-1003">Cell membrane</keyword>
<keyword id="KW-0963">Cytoplasm</keyword>
<keyword id="KW-0472">Membrane</keyword>
<keyword id="KW-0479">Metal-binding</keyword>
<keyword id="KW-0547">Nucleotide-binding</keyword>
<keyword id="KW-0653">Protein transport</keyword>
<keyword id="KW-1185">Reference proteome</keyword>
<keyword id="KW-1278">Translocase</keyword>
<keyword id="KW-0811">Translocation</keyword>
<keyword id="KW-0813">Transport</keyword>
<keyword id="KW-0862">Zinc</keyword>
<proteinExistence type="inferred from homology"/>
<reference key="1">
    <citation type="journal article" date="2006" name="Nat. Biotechnol.">
        <title>The genome and transcriptomes of the anti-tumor agent Clostridium novyi-NT.</title>
        <authorList>
            <person name="Bettegowda C."/>
            <person name="Huang X."/>
            <person name="Lin J."/>
            <person name="Cheong I."/>
            <person name="Kohli M."/>
            <person name="Szabo S.A."/>
            <person name="Zhang X."/>
            <person name="Diaz L.A. Jr."/>
            <person name="Velculescu V.E."/>
            <person name="Parmigiani G."/>
            <person name="Kinzler K.W."/>
            <person name="Vogelstein B."/>
            <person name="Zhou S."/>
        </authorList>
    </citation>
    <scope>NUCLEOTIDE SEQUENCE [LARGE SCALE GENOMIC DNA]</scope>
    <source>
        <strain>NT</strain>
    </source>
</reference>
<organism>
    <name type="scientific">Clostridium novyi (strain NT)</name>
    <dbReference type="NCBI Taxonomy" id="386415"/>
    <lineage>
        <taxon>Bacteria</taxon>
        <taxon>Bacillati</taxon>
        <taxon>Bacillota</taxon>
        <taxon>Clostridia</taxon>
        <taxon>Eubacteriales</taxon>
        <taxon>Clostridiaceae</taxon>
        <taxon>Clostridium</taxon>
    </lineage>
</organism>
<evidence type="ECO:0000255" key="1">
    <source>
        <dbReference type="HAMAP-Rule" id="MF_01382"/>
    </source>
</evidence>
<evidence type="ECO:0000256" key="2">
    <source>
        <dbReference type="SAM" id="MobiDB-lite"/>
    </source>
</evidence>
<gene>
    <name evidence="1" type="primary">secA</name>
    <name type="ordered locus">NT01CX_0509</name>
</gene>
<sequence length="834" mass="95455">MGLFEKIFGTYSSREIKKIIPIINKIDSYEEEFKKLTDEELRNKTDEFKDMLAKGKTLDDILPEAFAVAREASARVLGMRHFREQLIGGIVLHQGRISEMKTGEGKTLVATLPAYLNALSGKGVHVITVNDYLAKRDRDQMSQLYGFLGLTTGVIVHDLDNEQRREAYNCDITYGTNNEFGFDYLRDNMVIYKEERVQRKLNFCIVDEVDSILIDEARTPLIISGEGDNSTDFYKVADFFAKTLKEDDYTVDEKTNSVILTEQGIEKAEKFFHIDNYGDGDNMQIQHHVVQALKANYTMKRDKDYMVKDNEVIIVDEFTGRLMEGRRYSDGLHQAIEAKENVKIQKESKTLATITFQNYFRMYTKLSGMTGTAQTEEAEFREIYGLDVIVIPTHRPIARIDAPDVVYKSEKAKFKAIVNEIAETYKKQQPVLVGTVSIEKSELLSDMLKRKGVPHQVLNAKYHEKEAEIISHAGEKGMVTIATNMAGRGTDIKLGEGVEEVGGLKVIGTERHESRRIDNQLRGRSGRQGDPGYSRFYVSLEDDLMRIFASDRLQGVVEKLGLTDEDAIESRMVSNAIENAQKKVEGNNFDVRKSVLQYDDVMNQQREVIYKQRSQVLEGESLKEDIQEMIRSVISEAVDAHMSGLDETLEEDLEKLLAYLQEIYLPKNVVTVDELKIKSDDEIKEILIDIAEKMYSEKEEEVTPERMREIESVILLRIVDTKWMDHIDNMDHLRQGMGLRAYRQQDPVQAYQFEGSEMFDEMINGIKTDTVKYLFHIQVEKNIERERVARETSTNINDGEGGSHEPIKRKEEKIGRNDLCPCGSGKKYKNCCGR</sequence>
<dbReference type="EC" id="7.4.2.8" evidence="1"/>
<dbReference type="EMBL" id="CP000382">
    <property type="protein sequence ID" value="ABK61305.1"/>
    <property type="molecule type" value="Genomic_DNA"/>
</dbReference>
<dbReference type="RefSeq" id="WP_011722960.1">
    <property type="nucleotide sequence ID" value="NC_008593.1"/>
</dbReference>
<dbReference type="SMR" id="A0Q2X7"/>
<dbReference type="STRING" id="386415.NT01CX_0509"/>
<dbReference type="KEGG" id="cno:NT01CX_0509"/>
<dbReference type="eggNOG" id="COG0653">
    <property type="taxonomic scope" value="Bacteria"/>
</dbReference>
<dbReference type="HOGENOM" id="CLU_005314_3_0_9"/>
<dbReference type="Proteomes" id="UP000008220">
    <property type="component" value="Chromosome"/>
</dbReference>
<dbReference type="GO" id="GO:0031522">
    <property type="term" value="C:cell envelope Sec protein transport complex"/>
    <property type="evidence" value="ECO:0007669"/>
    <property type="project" value="TreeGrafter"/>
</dbReference>
<dbReference type="GO" id="GO:0005829">
    <property type="term" value="C:cytosol"/>
    <property type="evidence" value="ECO:0007669"/>
    <property type="project" value="TreeGrafter"/>
</dbReference>
<dbReference type="GO" id="GO:0005886">
    <property type="term" value="C:plasma membrane"/>
    <property type="evidence" value="ECO:0007669"/>
    <property type="project" value="UniProtKB-SubCell"/>
</dbReference>
<dbReference type="GO" id="GO:0005524">
    <property type="term" value="F:ATP binding"/>
    <property type="evidence" value="ECO:0007669"/>
    <property type="project" value="UniProtKB-UniRule"/>
</dbReference>
<dbReference type="GO" id="GO:0046872">
    <property type="term" value="F:metal ion binding"/>
    <property type="evidence" value="ECO:0007669"/>
    <property type="project" value="UniProtKB-KW"/>
</dbReference>
<dbReference type="GO" id="GO:0008564">
    <property type="term" value="F:protein-exporting ATPase activity"/>
    <property type="evidence" value="ECO:0007669"/>
    <property type="project" value="UniProtKB-EC"/>
</dbReference>
<dbReference type="GO" id="GO:0065002">
    <property type="term" value="P:intracellular protein transmembrane transport"/>
    <property type="evidence" value="ECO:0007669"/>
    <property type="project" value="UniProtKB-UniRule"/>
</dbReference>
<dbReference type="GO" id="GO:0017038">
    <property type="term" value="P:protein import"/>
    <property type="evidence" value="ECO:0007669"/>
    <property type="project" value="InterPro"/>
</dbReference>
<dbReference type="GO" id="GO:0006605">
    <property type="term" value="P:protein targeting"/>
    <property type="evidence" value="ECO:0007669"/>
    <property type="project" value="UniProtKB-UniRule"/>
</dbReference>
<dbReference type="GO" id="GO:0043952">
    <property type="term" value="P:protein transport by the Sec complex"/>
    <property type="evidence" value="ECO:0007669"/>
    <property type="project" value="TreeGrafter"/>
</dbReference>
<dbReference type="CDD" id="cd17928">
    <property type="entry name" value="DEXDc_SecA"/>
    <property type="match status" value="1"/>
</dbReference>
<dbReference type="CDD" id="cd18803">
    <property type="entry name" value="SF2_C_secA"/>
    <property type="match status" value="1"/>
</dbReference>
<dbReference type="FunFam" id="1.10.3060.10:FF:000002">
    <property type="entry name" value="Preprotein translocase subunit SecA"/>
    <property type="match status" value="1"/>
</dbReference>
<dbReference type="FunFam" id="3.40.50.300:FF:000429">
    <property type="entry name" value="Preprotein translocase subunit SecA"/>
    <property type="match status" value="1"/>
</dbReference>
<dbReference type="FunFam" id="3.90.1440.10:FF:000001">
    <property type="entry name" value="Preprotein translocase subunit SecA"/>
    <property type="match status" value="1"/>
</dbReference>
<dbReference type="FunFam" id="3.40.50.300:FF:000334">
    <property type="entry name" value="Protein translocase subunit SecA"/>
    <property type="match status" value="1"/>
</dbReference>
<dbReference type="Gene3D" id="1.10.3060.10">
    <property type="entry name" value="Helical scaffold and wing domains of SecA"/>
    <property type="match status" value="1"/>
</dbReference>
<dbReference type="Gene3D" id="3.40.50.300">
    <property type="entry name" value="P-loop containing nucleotide triphosphate hydrolases"/>
    <property type="match status" value="3"/>
</dbReference>
<dbReference type="Gene3D" id="3.90.1440.10">
    <property type="entry name" value="SecA, preprotein cross-linking domain"/>
    <property type="match status" value="1"/>
</dbReference>
<dbReference type="HAMAP" id="MF_01382">
    <property type="entry name" value="SecA"/>
    <property type="match status" value="1"/>
</dbReference>
<dbReference type="InterPro" id="IPR014001">
    <property type="entry name" value="Helicase_ATP-bd"/>
</dbReference>
<dbReference type="InterPro" id="IPR001650">
    <property type="entry name" value="Helicase_C-like"/>
</dbReference>
<dbReference type="InterPro" id="IPR027417">
    <property type="entry name" value="P-loop_NTPase"/>
</dbReference>
<dbReference type="InterPro" id="IPR004027">
    <property type="entry name" value="SEC_C_motif"/>
</dbReference>
<dbReference type="InterPro" id="IPR000185">
    <property type="entry name" value="SecA"/>
</dbReference>
<dbReference type="InterPro" id="IPR020937">
    <property type="entry name" value="SecA_CS"/>
</dbReference>
<dbReference type="InterPro" id="IPR011115">
    <property type="entry name" value="SecA_DEAD"/>
</dbReference>
<dbReference type="InterPro" id="IPR014018">
    <property type="entry name" value="SecA_motor_DEAD"/>
</dbReference>
<dbReference type="InterPro" id="IPR011130">
    <property type="entry name" value="SecA_preprotein_X-link_dom"/>
</dbReference>
<dbReference type="InterPro" id="IPR044722">
    <property type="entry name" value="SecA_SF2_C"/>
</dbReference>
<dbReference type="InterPro" id="IPR011116">
    <property type="entry name" value="SecA_Wing/Scaffold"/>
</dbReference>
<dbReference type="InterPro" id="IPR036266">
    <property type="entry name" value="SecA_Wing/Scaffold_sf"/>
</dbReference>
<dbReference type="InterPro" id="IPR036670">
    <property type="entry name" value="SecA_X-link_sf"/>
</dbReference>
<dbReference type="NCBIfam" id="NF006630">
    <property type="entry name" value="PRK09200.1"/>
    <property type="match status" value="1"/>
</dbReference>
<dbReference type="NCBIfam" id="NF009538">
    <property type="entry name" value="PRK12904.1"/>
    <property type="match status" value="1"/>
</dbReference>
<dbReference type="NCBIfam" id="TIGR00963">
    <property type="entry name" value="secA"/>
    <property type="match status" value="1"/>
</dbReference>
<dbReference type="PANTHER" id="PTHR30612:SF0">
    <property type="entry name" value="CHLOROPLAST PROTEIN-TRANSPORTING ATPASE"/>
    <property type="match status" value="1"/>
</dbReference>
<dbReference type="PANTHER" id="PTHR30612">
    <property type="entry name" value="SECA INNER MEMBRANE COMPONENT OF SEC PROTEIN SECRETION SYSTEM"/>
    <property type="match status" value="1"/>
</dbReference>
<dbReference type="Pfam" id="PF21090">
    <property type="entry name" value="P-loop_SecA"/>
    <property type="match status" value="1"/>
</dbReference>
<dbReference type="Pfam" id="PF02810">
    <property type="entry name" value="SEC-C"/>
    <property type="match status" value="1"/>
</dbReference>
<dbReference type="Pfam" id="PF07517">
    <property type="entry name" value="SecA_DEAD"/>
    <property type="match status" value="1"/>
</dbReference>
<dbReference type="Pfam" id="PF01043">
    <property type="entry name" value="SecA_PP_bind"/>
    <property type="match status" value="1"/>
</dbReference>
<dbReference type="Pfam" id="PF07516">
    <property type="entry name" value="SecA_SW"/>
    <property type="match status" value="1"/>
</dbReference>
<dbReference type="PRINTS" id="PR00906">
    <property type="entry name" value="SECA"/>
</dbReference>
<dbReference type="SMART" id="SM00957">
    <property type="entry name" value="SecA_DEAD"/>
    <property type="match status" value="1"/>
</dbReference>
<dbReference type="SMART" id="SM00958">
    <property type="entry name" value="SecA_PP_bind"/>
    <property type="match status" value="1"/>
</dbReference>
<dbReference type="SUPFAM" id="SSF81886">
    <property type="entry name" value="Helical scaffold and wing domains of SecA"/>
    <property type="match status" value="1"/>
</dbReference>
<dbReference type="SUPFAM" id="SSF52540">
    <property type="entry name" value="P-loop containing nucleoside triphosphate hydrolases"/>
    <property type="match status" value="2"/>
</dbReference>
<dbReference type="SUPFAM" id="SSF81767">
    <property type="entry name" value="Pre-protein crosslinking domain of SecA"/>
    <property type="match status" value="1"/>
</dbReference>
<dbReference type="PROSITE" id="PS01312">
    <property type="entry name" value="SECA"/>
    <property type="match status" value="1"/>
</dbReference>
<dbReference type="PROSITE" id="PS51196">
    <property type="entry name" value="SECA_MOTOR_DEAD"/>
    <property type="match status" value="1"/>
</dbReference>
<name>SECA_CLONN</name>
<feature type="chain" id="PRO_0000320781" description="Protein translocase subunit SecA">
    <location>
        <begin position="1"/>
        <end position="834"/>
    </location>
</feature>
<feature type="region of interest" description="Disordered" evidence="2">
    <location>
        <begin position="790"/>
        <end position="809"/>
    </location>
</feature>
<feature type="binding site" evidence="1">
    <location>
        <position position="85"/>
    </location>
    <ligand>
        <name>ATP</name>
        <dbReference type="ChEBI" id="CHEBI:30616"/>
    </ligand>
</feature>
<feature type="binding site" evidence="1">
    <location>
        <begin position="103"/>
        <end position="107"/>
    </location>
    <ligand>
        <name>ATP</name>
        <dbReference type="ChEBI" id="CHEBI:30616"/>
    </ligand>
</feature>
<feature type="binding site" evidence="1">
    <location>
        <position position="491"/>
    </location>
    <ligand>
        <name>ATP</name>
        <dbReference type="ChEBI" id="CHEBI:30616"/>
    </ligand>
</feature>
<feature type="binding site" evidence="1">
    <location>
        <position position="820"/>
    </location>
    <ligand>
        <name>Zn(2+)</name>
        <dbReference type="ChEBI" id="CHEBI:29105"/>
    </ligand>
</feature>
<feature type="binding site" evidence="1">
    <location>
        <position position="822"/>
    </location>
    <ligand>
        <name>Zn(2+)</name>
        <dbReference type="ChEBI" id="CHEBI:29105"/>
    </ligand>
</feature>
<feature type="binding site" evidence="1">
    <location>
        <position position="831"/>
    </location>
    <ligand>
        <name>Zn(2+)</name>
        <dbReference type="ChEBI" id="CHEBI:29105"/>
    </ligand>
</feature>
<feature type="binding site" evidence="1">
    <location>
        <position position="832"/>
    </location>
    <ligand>
        <name>Zn(2+)</name>
        <dbReference type="ChEBI" id="CHEBI:29105"/>
    </ligand>
</feature>
<protein>
    <recommendedName>
        <fullName evidence="1">Protein translocase subunit SecA</fullName>
        <ecNumber evidence="1">7.4.2.8</ecNumber>
    </recommendedName>
</protein>
<accession>A0Q2X7</accession>
<comment type="function">
    <text evidence="1">Part of the Sec protein translocase complex. Interacts with the SecYEG preprotein conducting channel. Has a central role in coupling the hydrolysis of ATP to the transfer of proteins into and across the cell membrane, serving as an ATP-driven molecular motor driving the stepwise translocation of polypeptide chains across the membrane.</text>
</comment>
<comment type="catalytic activity">
    <reaction evidence="1">
        <text>ATP + H2O + cellular proteinSide 1 = ADP + phosphate + cellular proteinSide 2.</text>
        <dbReference type="EC" id="7.4.2.8"/>
    </reaction>
</comment>
<comment type="cofactor">
    <cofactor evidence="1">
        <name>Zn(2+)</name>
        <dbReference type="ChEBI" id="CHEBI:29105"/>
    </cofactor>
    <text evidence="1">May bind 1 zinc ion per subunit.</text>
</comment>
<comment type="subunit">
    <text evidence="1">Monomer and homodimer. Part of the essential Sec protein translocation apparatus which comprises SecA, SecYEG and auxiliary proteins SecDF. Other proteins may also be involved.</text>
</comment>
<comment type="subcellular location">
    <subcellularLocation>
        <location evidence="1">Cell membrane</location>
        <topology evidence="1">Peripheral membrane protein</topology>
        <orientation evidence="1">Cytoplasmic side</orientation>
    </subcellularLocation>
    <subcellularLocation>
        <location evidence="1">Cytoplasm</location>
    </subcellularLocation>
    <text evidence="1">Distribution is 50-50.</text>
</comment>
<comment type="similarity">
    <text evidence="1">Belongs to the SecA family.</text>
</comment>